<gene>
    <name evidence="1" type="primary">astB</name>
    <name type="ordered locus">Bcen_0705</name>
</gene>
<accession>Q1BXP0</accession>
<sequence length="446" mass="48327">MNAQEANFDGLVGPTHNYAGLSFGNVASLNNEKSAANPKAAAKQGLRKMKQLADLGFAQGVLPPQERPSLRLLRELGFSGKDADVIAKAAKQAPELLAAASSASAMWTANAATVSPSADTSDGRVHFTPANLCSKLHRAIEHEATRRTLSTLFADPTHFAVHEALTGTPALGDEGAANHTRFCAEYGKPGIEFFVYGRAEYRRGPEPKRFPARQTFEASRAVAHRHGLAEEATVYAQQDPDVIDAGVFHNDVISVGNRDTLFTHERAFVNKQAIYDTLTAALDARGARLNVIEVPDAAVSVNDAVTSYLFNSQLLSRADGSQVLVVPQECRENARVAAYLDQLAAGNGPIHDVLVFDLRESMKNGGGPACLRLRVVLNDAERAAVTSNVWINDTLFASLDAWIDKHYRDRLAPEDLADPALLDESRTALDELTQILRVGSLYDFQR</sequence>
<name>ASTB_BURO1</name>
<dbReference type="EC" id="3.5.3.23" evidence="1"/>
<dbReference type="EMBL" id="CP000378">
    <property type="protein sequence ID" value="ABF75615.1"/>
    <property type="molecule type" value="Genomic_DNA"/>
</dbReference>
<dbReference type="SMR" id="Q1BXP0"/>
<dbReference type="HOGENOM" id="CLU_053835_0_0_4"/>
<dbReference type="UniPathway" id="UPA00185">
    <property type="reaction ID" value="UER00280"/>
</dbReference>
<dbReference type="GO" id="GO:0009015">
    <property type="term" value="F:N-succinylarginine dihydrolase activity"/>
    <property type="evidence" value="ECO:0007669"/>
    <property type="project" value="UniProtKB-UniRule"/>
</dbReference>
<dbReference type="GO" id="GO:0019544">
    <property type="term" value="P:arginine catabolic process to glutamate"/>
    <property type="evidence" value="ECO:0007669"/>
    <property type="project" value="UniProtKB-UniRule"/>
</dbReference>
<dbReference type="GO" id="GO:0019545">
    <property type="term" value="P:arginine catabolic process to succinate"/>
    <property type="evidence" value="ECO:0007669"/>
    <property type="project" value="UniProtKB-UniRule"/>
</dbReference>
<dbReference type="Gene3D" id="3.75.10.20">
    <property type="entry name" value="Succinylarginine dihydrolase"/>
    <property type="match status" value="1"/>
</dbReference>
<dbReference type="HAMAP" id="MF_01172">
    <property type="entry name" value="AstB"/>
    <property type="match status" value="1"/>
</dbReference>
<dbReference type="InterPro" id="IPR037031">
    <property type="entry name" value="AstB_sf"/>
</dbReference>
<dbReference type="InterPro" id="IPR007079">
    <property type="entry name" value="SuccinylArg_d-Hdrlase_AstB"/>
</dbReference>
<dbReference type="NCBIfam" id="TIGR03241">
    <property type="entry name" value="arg_catab_astB"/>
    <property type="match status" value="1"/>
</dbReference>
<dbReference type="NCBIfam" id="NF009789">
    <property type="entry name" value="PRK13281.1"/>
    <property type="match status" value="1"/>
</dbReference>
<dbReference type="PANTHER" id="PTHR30420">
    <property type="entry name" value="N-SUCCINYLARGININE DIHYDROLASE"/>
    <property type="match status" value="1"/>
</dbReference>
<dbReference type="PANTHER" id="PTHR30420:SF2">
    <property type="entry name" value="N-SUCCINYLARGININE DIHYDROLASE"/>
    <property type="match status" value="1"/>
</dbReference>
<dbReference type="Pfam" id="PF04996">
    <property type="entry name" value="AstB"/>
    <property type="match status" value="1"/>
</dbReference>
<dbReference type="SUPFAM" id="SSF55909">
    <property type="entry name" value="Pentein"/>
    <property type="match status" value="1"/>
</dbReference>
<reference key="1">
    <citation type="submission" date="2006-05" db="EMBL/GenBank/DDBJ databases">
        <title>Complete sequence of chromosome 1 of Burkholderia cenocepacia AU 1054.</title>
        <authorList>
            <consortium name="US DOE Joint Genome Institute"/>
            <person name="Copeland A."/>
            <person name="Lucas S."/>
            <person name="Lapidus A."/>
            <person name="Barry K."/>
            <person name="Detter J.C."/>
            <person name="Glavina del Rio T."/>
            <person name="Hammon N."/>
            <person name="Israni S."/>
            <person name="Dalin E."/>
            <person name="Tice H."/>
            <person name="Pitluck S."/>
            <person name="Chain P."/>
            <person name="Malfatti S."/>
            <person name="Shin M."/>
            <person name="Vergez L."/>
            <person name="Schmutz J."/>
            <person name="Larimer F."/>
            <person name="Land M."/>
            <person name="Hauser L."/>
            <person name="Kyrpides N."/>
            <person name="Lykidis A."/>
            <person name="LiPuma J.J."/>
            <person name="Konstantinidis K."/>
            <person name="Tiedje J.M."/>
            <person name="Richardson P."/>
        </authorList>
    </citation>
    <scope>NUCLEOTIDE SEQUENCE [LARGE SCALE GENOMIC DNA]</scope>
    <source>
        <strain>AU 1054</strain>
    </source>
</reference>
<keyword id="KW-0056">Arginine metabolism</keyword>
<keyword id="KW-0378">Hydrolase</keyword>
<proteinExistence type="inferred from homology"/>
<evidence type="ECO:0000255" key="1">
    <source>
        <dbReference type="HAMAP-Rule" id="MF_01172"/>
    </source>
</evidence>
<protein>
    <recommendedName>
        <fullName evidence="1">N-succinylarginine dihydrolase</fullName>
        <ecNumber evidence="1">3.5.3.23</ecNumber>
    </recommendedName>
</protein>
<organism>
    <name type="scientific">Burkholderia orbicola (strain AU 1054)</name>
    <dbReference type="NCBI Taxonomy" id="331271"/>
    <lineage>
        <taxon>Bacteria</taxon>
        <taxon>Pseudomonadati</taxon>
        <taxon>Pseudomonadota</taxon>
        <taxon>Betaproteobacteria</taxon>
        <taxon>Burkholderiales</taxon>
        <taxon>Burkholderiaceae</taxon>
        <taxon>Burkholderia</taxon>
        <taxon>Burkholderia cepacia complex</taxon>
        <taxon>Burkholderia orbicola</taxon>
    </lineage>
</organism>
<feature type="chain" id="PRO_0000262338" description="N-succinylarginine dihydrolase">
    <location>
        <begin position="1"/>
        <end position="446"/>
    </location>
</feature>
<feature type="active site" evidence="1">
    <location>
        <position position="174"/>
    </location>
</feature>
<feature type="active site" evidence="1">
    <location>
        <position position="249"/>
    </location>
</feature>
<feature type="active site" description="Nucleophile" evidence="1">
    <location>
        <position position="370"/>
    </location>
</feature>
<feature type="binding site" evidence="1">
    <location>
        <begin position="19"/>
        <end position="28"/>
    </location>
    <ligand>
        <name>substrate</name>
    </ligand>
</feature>
<feature type="binding site" evidence="1">
    <location>
        <position position="110"/>
    </location>
    <ligand>
        <name>substrate</name>
    </ligand>
</feature>
<feature type="binding site" evidence="1">
    <location>
        <begin position="137"/>
        <end position="138"/>
    </location>
    <ligand>
        <name>substrate</name>
    </ligand>
</feature>
<feature type="binding site" evidence="1">
    <location>
        <position position="213"/>
    </location>
    <ligand>
        <name>substrate</name>
    </ligand>
</feature>
<feature type="binding site" evidence="1">
    <location>
        <position position="251"/>
    </location>
    <ligand>
        <name>substrate</name>
    </ligand>
</feature>
<feature type="binding site" evidence="1">
    <location>
        <position position="364"/>
    </location>
    <ligand>
        <name>substrate</name>
    </ligand>
</feature>
<comment type="function">
    <text evidence="1">Catalyzes the hydrolysis of N(2)-succinylarginine into N(2)-succinylornithine, ammonia and CO(2).</text>
</comment>
<comment type="catalytic activity">
    <reaction evidence="1">
        <text>N(2)-succinyl-L-arginine + 2 H2O + 2 H(+) = N(2)-succinyl-L-ornithine + 2 NH4(+) + CO2</text>
        <dbReference type="Rhea" id="RHEA:19533"/>
        <dbReference type="ChEBI" id="CHEBI:15377"/>
        <dbReference type="ChEBI" id="CHEBI:15378"/>
        <dbReference type="ChEBI" id="CHEBI:16526"/>
        <dbReference type="ChEBI" id="CHEBI:28938"/>
        <dbReference type="ChEBI" id="CHEBI:58241"/>
        <dbReference type="ChEBI" id="CHEBI:58514"/>
        <dbReference type="EC" id="3.5.3.23"/>
    </reaction>
</comment>
<comment type="pathway">
    <text evidence="1">Amino-acid degradation; L-arginine degradation via AST pathway; L-glutamate and succinate from L-arginine: step 2/5.</text>
</comment>
<comment type="subunit">
    <text evidence="1">Homodimer.</text>
</comment>
<comment type="similarity">
    <text evidence="1">Belongs to the succinylarginine dihydrolase family.</text>
</comment>